<proteinExistence type="inferred from homology"/>
<keyword id="KW-0687">Ribonucleoprotein</keyword>
<keyword id="KW-0689">Ribosomal protein</keyword>
<gene>
    <name evidence="1" type="primary">rplS</name>
    <name type="ordered locus">SBO_2742</name>
</gene>
<dbReference type="EMBL" id="CP000036">
    <property type="protein sequence ID" value="ABB67269.1"/>
    <property type="molecule type" value="Genomic_DNA"/>
</dbReference>
<dbReference type="RefSeq" id="WP_000065253.1">
    <property type="nucleotide sequence ID" value="NC_007613.1"/>
</dbReference>
<dbReference type="SMR" id="Q31XD9"/>
<dbReference type="GeneID" id="93774456"/>
<dbReference type="KEGG" id="sbo:SBO_2742"/>
<dbReference type="HOGENOM" id="CLU_103507_2_1_6"/>
<dbReference type="Proteomes" id="UP000007067">
    <property type="component" value="Chromosome"/>
</dbReference>
<dbReference type="GO" id="GO:0022625">
    <property type="term" value="C:cytosolic large ribosomal subunit"/>
    <property type="evidence" value="ECO:0007669"/>
    <property type="project" value="TreeGrafter"/>
</dbReference>
<dbReference type="GO" id="GO:0003735">
    <property type="term" value="F:structural constituent of ribosome"/>
    <property type="evidence" value="ECO:0007669"/>
    <property type="project" value="InterPro"/>
</dbReference>
<dbReference type="GO" id="GO:0006412">
    <property type="term" value="P:translation"/>
    <property type="evidence" value="ECO:0007669"/>
    <property type="project" value="UniProtKB-UniRule"/>
</dbReference>
<dbReference type="FunFam" id="2.30.30.790:FF:000001">
    <property type="entry name" value="50S ribosomal protein L19"/>
    <property type="match status" value="1"/>
</dbReference>
<dbReference type="Gene3D" id="2.30.30.790">
    <property type="match status" value="1"/>
</dbReference>
<dbReference type="HAMAP" id="MF_00402">
    <property type="entry name" value="Ribosomal_bL19"/>
    <property type="match status" value="1"/>
</dbReference>
<dbReference type="InterPro" id="IPR001857">
    <property type="entry name" value="Ribosomal_bL19"/>
</dbReference>
<dbReference type="InterPro" id="IPR018257">
    <property type="entry name" value="Ribosomal_bL19_CS"/>
</dbReference>
<dbReference type="InterPro" id="IPR038657">
    <property type="entry name" value="Ribosomal_bL19_sf"/>
</dbReference>
<dbReference type="InterPro" id="IPR008991">
    <property type="entry name" value="Translation_prot_SH3-like_sf"/>
</dbReference>
<dbReference type="NCBIfam" id="TIGR01024">
    <property type="entry name" value="rplS_bact"/>
    <property type="match status" value="1"/>
</dbReference>
<dbReference type="PANTHER" id="PTHR15680:SF9">
    <property type="entry name" value="LARGE RIBOSOMAL SUBUNIT PROTEIN BL19M"/>
    <property type="match status" value="1"/>
</dbReference>
<dbReference type="PANTHER" id="PTHR15680">
    <property type="entry name" value="RIBOSOMAL PROTEIN L19"/>
    <property type="match status" value="1"/>
</dbReference>
<dbReference type="Pfam" id="PF01245">
    <property type="entry name" value="Ribosomal_L19"/>
    <property type="match status" value="1"/>
</dbReference>
<dbReference type="PIRSF" id="PIRSF002191">
    <property type="entry name" value="Ribosomal_L19"/>
    <property type="match status" value="1"/>
</dbReference>
<dbReference type="PRINTS" id="PR00061">
    <property type="entry name" value="RIBOSOMALL19"/>
</dbReference>
<dbReference type="SUPFAM" id="SSF50104">
    <property type="entry name" value="Translation proteins SH3-like domain"/>
    <property type="match status" value="1"/>
</dbReference>
<dbReference type="PROSITE" id="PS01015">
    <property type="entry name" value="RIBOSOMAL_L19"/>
    <property type="match status" value="1"/>
</dbReference>
<feature type="chain" id="PRO_0000226871" description="Large ribosomal subunit protein bL19">
    <location>
        <begin position="1"/>
        <end position="115"/>
    </location>
</feature>
<protein>
    <recommendedName>
        <fullName evidence="1">Large ribosomal subunit protein bL19</fullName>
    </recommendedName>
    <alternativeName>
        <fullName evidence="2">50S ribosomal protein L19</fullName>
    </alternativeName>
</protein>
<comment type="function">
    <text evidence="1">This protein is located at the 30S-50S ribosomal subunit interface and may play a role in the structure and function of the aminoacyl-tRNA binding site.</text>
</comment>
<comment type="similarity">
    <text evidence="1">Belongs to the bacterial ribosomal protein bL19 family.</text>
</comment>
<reference key="1">
    <citation type="journal article" date="2005" name="Nucleic Acids Res.">
        <title>Genome dynamics and diversity of Shigella species, the etiologic agents of bacillary dysentery.</title>
        <authorList>
            <person name="Yang F."/>
            <person name="Yang J."/>
            <person name="Zhang X."/>
            <person name="Chen L."/>
            <person name="Jiang Y."/>
            <person name="Yan Y."/>
            <person name="Tang X."/>
            <person name="Wang J."/>
            <person name="Xiong Z."/>
            <person name="Dong J."/>
            <person name="Xue Y."/>
            <person name="Zhu Y."/>
            <person name="Xu X."/>
            <person name="Sun L."/>
            <person name="Chen S."/>
            <person name="Nie H."/>
            <person name="Peng J."/>
            <person name="Xu J."/>
            <person name="Wang Y."/>
            <person name="Yuan Z."/>
            <person name="Wen Y."/>
            <person name="Yao Z."/>
            <person name="Shen Y."/>
            <person name="Qiang B."/>
            <person name="Hou Y."/>
            <person name="Yu J."/>
            <person name="Jin Q."/>
        </authorList>
    </citation>
    <scope>NUCLEOTIDE SEQUENCE [LARGE SCALE GENOMIC DNA]</scope>
    <source>
        <strain>Sb227</strain>
    </source>
</reference>
<accession>Q31XD9</accession>
<evidence type="ECO:0000255" key="1">
    <source>
        <dbReference type="HAMAP-Rule" id="MF_00402"/>
    </source>
</evidence>
<evidence type="ECO:0000305" key="2"/>
<name>RL19_SHIBS</name>
<organism>
    <name type="scientific">Shigella boydii serotype 4 (strain Sb227)</name>
    <dbReference type="NCBI Taxonomy" id="300268"/>
    <lineage>
        <taxon>Bacteria</taxon>
        <taxon>Pseudomonadati</taxon>
        <taxon>Pseudomonadota</taxon>
        <taxon>Gammaproteobacteria</taxon>
        <taxon>Enterobacterales</taxon>
        <taxon>Enterobacteriaceae</taxon>
        <taxon>Shigella</taxon>
    </lineage>
</organism>
<sequence length="115" mass="13133">MSNIIKQLEQEQMKQDVPSFRPGDTVEVKVWVVEGSKKRLQAFEGVVIAIRNRGLHSAFTVRKISNGEGVERVFQTHSPVVDSISVKRRGAVRKAKLYYLRERTGKAARIKERLN</sequence>